<gene>
    <name evidence="1" type="primary">zapD</name>
    <name type="ordered locus">BMA2535</name>
</gene>
<reference key="1">
    <citation type="journal article" date="2004" name="Proc. Natl. Acad. Sci. U.S.A.">
        <title>Structural flexibility in the Burkholderia mallei genome.</title>
        <authorList>
            <person name="Nierman W.C."/>
            <person name="DeShazer D."/>
            <person name="Kim H.S."/>
            <person name="Tettelin H."/>
            <person name="Nelson K.E."/>
            <person name="Feldblyum T.V."/>
            <person name="Ulrich R.L."/>
            <person name="Ronning C.M."/>
            <person name="Brinkac L.M."/>
            <person name="Daugherty S.C."/>
            <person name="Davidsen T.D."/>
            <person name="DeBoy R.T."/>
            <person name="Dimitrov G."/>
            <person name="Dodson R.J."/>
            <person name="Durkin A.S."/>
            <person name="Gwinn M.L."/>
            <person name="Haft D.H."/>
            <person name="Khouri H.M."/>
            <person name="Kolonay J.F."/>
            <person name="Madupu R."/>
            <person name="Mohammoud Y."/>
            <person name="Nelson W.C."/>
            <person name="Radune D."/>
            <person name="Romero C.M."/>
            <person name="Sarria S."/>
            <person name="Selengut J."/>
            <person name="Shamblin C."/>
            <person name="Sullivan S.A."/>
            <person name="White O."/>
            <person name="Yu Y."/>
            <person name="Zafar N."/>
            <person name="Zhou L."/>
            <person name="Fraser C.M."/>
        </authorList>
    </citation>
    <scope>NUCLEOTIDE SEQUENCE [LARGE SCALE GENOMIC DNA]</scope>
    <source>
        <strain>ATCC 23344</strain>
    </source>
</reference>
<comment type="function">
    <text evidence="1">Cell division factor that enhances FtsZ-ring assembly. Directly interacts with FtsZ and promotes bundling of FtsZ protofilaments, with a reduction in FtsZ GTPase activity.</text>
</comment>
<comment type="subunit">
    <text evidence="1">Interacts with FtsZ.</text>
</comment>
<comment type="subcellular location">
    <subcellularLocation>
        <location evidence="1">Cytoplasm</location>
    </subcellularLocation>
    <text evidence="1">Localizes to mid-cell in an FtsZ-dependent manner.</text>
</comment>
<comment type="similarity">
    <text evidence="1">Belongs to the ZapD family.</text>
</comment>
<proteinExistence type="inferred from homology"/>
<organism>
    <name type="scientific">Burkholderia mallei (strain ATCC 23344)</name>
    <dbReference type="NCBI Taxonomy" id="243160"/>
    <lineage>
        <taxon>Bacteria</taxon>
        <taxon>Pseudomonadati</taxon>
        <taxon>Pseudomonadota</taxon>
        <taxon>Betaproteobacteria</taxon>
        <taxon>Burkholderiales</taxon>
        <taxon>Burkholderiaceae</taxon>
        <taxon>Burkholderia</taxon>
        <taxon>pseudomallei group</taxon>
    </lineage>
</organism>
<accession>Q62GU2</accession>
<keyword id="KW-0131">Cell cycle</keyword>
<keyword id="KW-0132">Cell division</keyword>
<keyword id="KW-0963">Cytoplasm</keyword>
<keyword id="KW-1185">Reference proteome</keyword>
<keyword id="KW-0717">Septation</keyword>
<sequence>MILYEYPFNERIRTLLRLEDLFERFTFFVAQEDAREHHVALTTLFEISEVAGRADLKSDLMKELERQRQTLAPFRGNPGIEQNALEAVLGEIEQTLANLAQMQGKTGQHLIDNEWLASIRSRAVIPGGTCKFDLPSYYAWQQWPAEQRRHDIAKWAMPLLPLRDAAMIVLRLARESGQASKVMAMQGSYQQMLSGRTYQLMQVRVPPELRVIPEASANKYMLWVRFTAQDGDVRPRAVDIDVPFQLTLCNL</sequence>
<feature type="chain" id="PRO_0000211663" description="Cell division protein ZapD">
    <location>
        <begin position="1"/>
        <end position="251"/>
    </location>
</feature>
<name>ZAPD_BURMA</name>
<protein>
    <recommendedName>
        <fullName evidence="1">Cell division protein ZapD</fullName>
    </recommendedName>
    <alternativeName>
        <fullName evidence="1">Z ring-associated protein D</fullName>
    </alternativeName>
</protein>
<evidence type="ECO:0000255" key="1">
    <source>
        <dbReference type="HAMAP-Rule" id="MF_01092"/>
    </source>
</evidence>
<dbReference type="EMBL" id="CP000010">
    <property type="protein sequence ID" value="AAU50079.1"/>
    <property type="molecule type" value="Genomic_DNA"/>
</dbReference>
<dbReference type="RefSeq" id="WP_004195118.1">
    <property type="nucleotide sequence ID" value="NC_006348.1"/>
</dbReference>
<dbReference type="RefSeq" id="YP_104079.1">
    <property type="nucleotide sequence ID" value="NC_006348.1"/>
</dbReference>
<dbReference type="SMR" id="Q62GU2"/>
<dbReference type="GeneID" id="93061613"/>
<dbReference type="KEGG" id="bma:BMA2535"/>
<dbReference type="PATRIC" id="fig|243160.12.peg.2613"/>
<dbReference type="eggNOG" id="COG4582">
    <property type="taxonomic scope" value="Bacteria"/>
</dbReference>
<dbReference type="HOGENOM" id="CLU_076303_0_1_4"/>
<dbReference type="Proteomes" id="UP000006693">
    <property type="component" value="Chromosome 1"/>
</dbReference>
<dbReference type="GO" id="GO:0032153">
    <property type="term" value="C:cell division site"/>
    <property type="evidence" value="ECO:0007669"/>
    <property type="project" value="TreeGrafter"/>
</dbReference>
<dbReference type="GO" id="GO:0005737">
    <property type="term" value="C:cytoplasm"/>
    <property type="evidence" value="ECO:0007669"/>
    <property type="project" value="UniProtKB-SubCell"/>
</dbReference>
<dbReference type="GO" id="GO:0000917">
    <property type="term" value="P:division septum assembly"/>
    <property type="evidence" value="ECO:0007669"/>
    <property type="project" value="UniProtKB-KW"/>
</dbReference>
<dbReference type="GO" id="GO:0043093">
    <property type="term" value="P:FtsZ-dependent cytokinesis"/>
    <property type="evidence" value="ECO:0007669"/>
    <property type="project" value="UniProtKB-UniRule"/>
</dbReference>
<dbReference type="Gene3D" id="1.10.3900.10">
    <property type="entry name" value="YacF-like"/>
    <property type="match status" value="1"/>
</dbReference>
<dbReference type="Gene3D" id="2.60.440.10">
    <property type="entry name" value="YacF-like domains"/>
    <property type="match status" value="1"/>
</dbReference>
<dbReference type="HAMAP" id="MF_01092">
    <property type="entry name" value="ZapD"/>
    <property type="match status" value="1"/>
</dbReference>
<dbReference type="InterPro" id="IPR009777">
    <property type="entry name" value="ZapD"/>
</dbReference>
<dbReference type="InterPro" id="IPR027462">
    <property type="entry name" value="ZapD_C"/>
</dbReference>
<dbReference type="InterPro" id="IPR036268">
    <property type="entry name" value="ZapD_sf"/>
</dbReference>
<dbReference type="NCBIfam" id="NF003656">
    <property type="entry name" value="PRK05287.1-4"/>
    <property type="match status" value="1"/>
</dbReference>
<dbReference type="PANTHER" id="PTHR39455">
    <property type="entry name" value="CELL DIVISION PROTEIN ZAPD"/>
    <property type="match status" value="1"/>
</dbReference>
<dbReference type="PANTHER" id="PTHR39455:SF1">
    <property type="entry name" value="CELL DIVISION PROTEIN ZAPD"/>
    <property type="match status" value="1"/>
</dbReference>
<dbReference type="Pfam" id="PF07072">
    <property type="entry name" value="ZapD"/>
    <property type="match status" value="1"/>
</dbReference>
<dbReference type="SUPFAM" id="SSF160950">
    <property type="entry name" value="YacF-like"/>
    <property type="match status" value="1"/>
</dbReference>